<dbReference type="EC" id="2.5.1.-" evidence="3 4"/>
<dbReference type="EMBL" id="MF538775">
    <property type="protein sequence ID" value="ATP76207.1"/>
    <property type="molecule type" value="Genomic_DNA"/>
</dbReference>
<dbReference type="SMR" id="A0A2D1VNM2"/>
<dbReference type="GO" id="GO:0004659">
    <property type="term" value="F:prenyltransferase activity"/>
    <property type="evidence" value="ECO:0007669"/>
    <property type="project" value="UniProtKB-KW"/>
</dbReference>
<dbReference type="GO" id="GO:0009820">
    <property type="term" value="P:alkaloid metabolic process"/>
    <property type="evidence" value="ECO:0007669"/>
    <property type="project" value="InterPro"/>
</dbReference>
<dbReference type="CDD" id="cd13929">
    <property type="entry name" value="PT-DMATS_CymD"/>
    <property type="match status" value="1"/>
</dbReference>
<dbReference type="InterPro" id="IPR033964">
    <property type="entry name" value="Aro_prenylTrfase"/>
</dbReference>
<dbReference type="InterPro" id="IPR017795">
    <property type="entry name" value="Aro_prenylTrfase_DMATS"/>
</dbReference>
<dbReference type="InterPro" id="IPR012148">
    <property type="entry name" value="DMATS-type_fun"/>
</dbReference>
<dbReference type="NCBIfam" id="TIGR03429">
    <property type="entry name" value="arom_pren_DMATS"/>
    <property type="match status" value="1"/>
</dbReference>
<dbReference type="PANTHER" id="PTHR40627">
    <property type="entry name" value="INDOLE PRENYLTRANSFERASE TDIB-RELATED"/>
    <property type="match status" value="1"/>
</dbReference>
<dbReference type="PANTHER" id="PTHR40627:SF3">
    <property type="entry name" value="PRENYLTRANSFERASE ASQH2-RELATED"/>
    <property type="match status" value="1"/>
</dbReference>
<dbReference type="Pfam" id="PF11991">
    <property type="entry name" value="Trp_DMAT"/>
    <property type="match status" value="1"/>
</dbReference>
<dbReference type="PIRSF" id="PIRSF000509">
    <property type="entry name" value="Trp_DMAT"/>
    <property type="match status" value="1"/>
</dbReference>
<dbReference type="SFLD" id="SFLDS00036">
    <property type="entry name" value="Aromatic_Prenyltransferase"/>
    <property type="match status" value="1"/>
</dbReference>
<dbReference type="SFLD" id="SFLDG01162">
    <property type="entry name" value="I"/>
    <property type="match status" value="1"/>
</dbReference>
<organism>
    <name type="scientific">Aspergillus ruber</name>
    <name type="common">Eurotium rubrum</name>
    <dbReference type="NCBI Taxonomy" id="396024"/>
    <lineage>
        <taxon>Eukaryota</taxon>
        <taxon>Fungi</taxon>
        <taxon>Dikarya</taxon>
        <taxon>Ascomycota</taxon>
        <taxon>Pezizomycotina</taxon>
        <taxon>Eurotiomycetes</taxon>
        <taxon>Eurotiomycetidae</taxon>
        <taxon>Eurotiales</taxon>
        <taxon>Aspergillaceae</taxon>
        <taxon>Aspergillus</taxon>
        <taxon>Aspergillus subgen. Aspergillus</taxon>
    </lineage>
</organism>
<accession>A0A2D1VNM2</accession>
<name>PT2_ASPRB</name>
<sequence>MQPYHTLSRVLPFPDANQKAWWDKLGPMLLKAMQSQGYDTEAQYAQLGMVYKCVLPYLGEFPTVENDATRWKSFLCPYGIPIEPSLNISQGILRYAFEPIGPDVGTEKDPQNMNIIQDCLKGLTQHDDRIDTTLHAEFSSRLLLTEEESRQFATTGQFNFGPGQGMHGFAVDLKGSRPMFKGYFCAGIKSVVTGIPTGKLMLDAVREVDTEGRITQPLDKLEEYSANGIGKLMLCFMSVDMVNPHDARIKMYGLQQEVSREGIVDLWTLGGRVNTPTNQEGLELLLELWDLLQIPAGPRSVAISHCSVGQPPEYMLPTLVNWTLLPGHSDPMPQVYLVPFGLPDSHISDCLVTFFERRGWTDLARDYKKNLASYFPDIDFTQSRHVQEAISFSFRKGKPYLSIYMSLF</sequence>
<keyword id="KW-0637">Prenyltransferase</keyword>
<keyword id="KW-0808">Transferase</keyword>
<gene>
    <name evidence="6" type="primary">echPT2</name>
</gene>
<reference key="1">
    <citation type="journal article" date="2017" name="Org. Lett.">
        <title>Two prenyltransferases govern a consecutive prenylation cascade in the biosynthesis of echinulin and neoechinulin.</title>
        <authorList>
            <person name="Wohlgemuth V."/>
            <person name="Kindinger F."/>
            <person name="Xie X."/>
            <person name="Wang B.G."/>
            <person name="Li S.M."/>
        </authorList>
    </citation>
    <scope>NUCLEOTIDE SEQUENCE [GENOMIC DNA]</scope>
    <scope>FUNCTION</scope>
    <scope>CATALYTIC ACTIVITY</scope>
    <scope>BIOPHYSICOCHEMICAL PROPERTIES</scope>
    <scope>PATHWAY</scope>
    <source>
        <strain>QEN-0407-G2</strain>
    </source>
</reference>
<reference key="2">
    <citation type="journal article" date="2021" name="ACS Chem. Biol.">
        <title>Prenylation and dehydrogenation of a C2-reversely prenylated diketopiperazine as a branching point in the biosynthesis of echinulin family alkaloids in Aspergillus ruber.</title>
        <authorList>
            <person name="Nies J."/>
            <person name="Li S.M."/>
        </authorList>
    </citation>
    <scope>FUNCTION</scope>
    <scope>CATALYTIC ACTIVITY</scope>
    <scope>BIOPHYSICOCHEMICAL PROPERTIES</scope>
    <scope>PATHWAY</scope>
</reference>
<proteinExistence type="evidence at protein level"/>
<evidence type="ECO:0000250" key="1">
    <source>
        <dbReference type="UniProtKB" id="A0A1E3B0T2"/>
    </source>
</evidence>
<evidence type="ECO:0000250" key="2">
    <source>
        <dbReference type="UniProtKB" id="Q50EL0"/>
    </source>
</evidence>
<evidence type="ECO:0000269" key="3">
    <source>
    </source>
</evidence>
<evidence type="ECO:0000269" key="4">
    <source>
    </source>
</evidence>
<evidence type="ECO:0000303" key="5">
    <source>
    </source>
</evidence>
<evidence type="ECO:0000303" key="6">
    <source>
    </source>
</evidence>
<evidence type="ECO:0000305" key="7"/>
<comment type="function">
    <text evidence="1 3 4">Prenyltransferase; part of the gene cluster that mediates the biosynthesis of echinulin family alkaloid (PubMed:29072465, PubMed:33381959). The pathway begins with the biosynthesis of the cyclic dipeptide cyclo-L-Trp-L-Ala (cyclo-TA) by the NRPS echPS via condensation of L-alanine and L-tryptophan (By similarity). The prenyltransferase echPT1 then catalyzes the first prenylation step, a reverse prenylation reaction at C2, to yield preechinulin (PubMed:29072465, PubMed:33381959). Preechinulin is the substrate of the cytochrome P450 monooxygenase echP450 that catalyzes the formation of the double bond between C10 and C11 to produce neoechulin A (PubMed:33381959). The unique prenyltransferase echPT2 functions as a competitive enzyme with echP450 for preechinulin metabolization and uses preechinulin for effective regiospecific prenylations. Preechinulin is prenylated by echPT2 at C5 or C7. C7-prenylation leads to accumulation of tardioxopiperazine B without further modification by echPT2. In contrast, the C5-prenylated tardioxopiperazine A can be prenylated again by echPT2, predominantly at C7 to form echinulin or less frequently at C4 to give variecolorin L. EchPT2 also accepts neoechilunin A to produce varlecolorin G (prenylation at C5) or isoechinulin A (prenylation at C7). EchPT2 further converts isoechinulin A into dehydroechinulin. Moreover, a yet unidentified enzyme can also convert neoechilunin A into neoechilunin B by introducing a double bond between positions C14 and C17 and thus provides a further substrate to echPT2 for C5 and C7 prenylation (PubMed:29072465, PubMed:33381959).</text>
</comment>
<comment type="catalytic activity">
    <reaction evidence="3 4">
        <text>preechinulin + dimethylallyl diphosphate = tardioxopiperazine B + diphosphate</text>
        <dbReference type="Rhea" id="RHEA:73775"/>
        <dbReference type="ChEBI" id="CHEBI:33019"/>
        <dbReference type="ChEBI" id="CHEBI:57623"/>
        <dbReference type="ChEBI" id="CHEBI:193003"/>
        <dbReference type="ChEBI" id="CHEBI:193006"/>
    </reaction>
    <physiologicalReaction direction="left-to-right" evidence="3 4">
        <dbReference type="Rhea" id="RHEA:73776"/>
    </physiologicalReaction>
</comment>
<comment type="catalytic activity">
    <reaction evidence="3 4">
        <text>preechinulin + dimethylallyl diphosphate = tardioxopiperazine A + diphosphate</text>
        <dbReference type="Rhea" id="RHEA:73779"/>
        <dbReference type="ChEBI" id="CHEBI:33019"/>
        <dbReference type="ChEBI" id="CHEBI:57623"/>
        <dbReference type="ChEBI" id="CHEBI:193003"/>
        <dbReference type="ChEBI" id="CHEBI:193007"/>
    </reaction>
    <physiologicalReaction direction="left-to-right" evidence="3 4">
        <dbReference type="Rhea" id="RHEA:73780"/>
    </physiologicalReaction>
</comment>
<comment type="catalytic activity">
    <reaction evidence="3 4">
        <text>tardioxopiperazine A + dimethylallyl diphosphate = echinulin + diphosphate</text>
        <dbReference type="Rhea" id="RHEA:73783"/>
        <dbReference type="ChEBI" id="CHEBI:33019"/>
        <dbReference type="ChEBI" id="CHEBI:57623"/>
        <dbReference type="ChEBI" id="CHEBI:68193"/>
        <dbReference type="ChEBI" id="CHEBI:193007"/>
    </reaction>
    <physiologicalReaction direction="left-to-right" evidence="3 4">
        <dbReference type="Rhea" id="RHEA:73784"/>
    </physiologicalReaction>
</comment>
<comment type="catalytic activity">
    <reaction evidence="3 4">
        <text>tardioxopiperazine A + dimethylallyl diphosphate = variecolorin L + diphosphate</text>
        <dbReference type="Rhea" id="RHEA:73787"/>
        <dbReference type="ChEBI" id="CHEBI:33019"/>
        <dbReference type="ChEBI" id="CHEBI:57623"/>
        <dbReference type="ChEBI" id="CHEBI:193007"/>
        <dbReference type="ChEBI" id="CHEBI:193008"/>
    </reaction>
    <physiologicalReaction direction="left-to-right" evidence="3 4">
        <dbReference type="Rhea" id="RHEA:73788"/>
    </physiologicalReaction>
</comment>
<comment type="catalytic activity">
    <reaction evidence="3 4">
        <text>neoechinulin A + dimethylallyl diphosphate = variecolorin G + diphosphate</text>
        <dbReference type="Rhea" id="RHEA:73791"/>
        <dbReference type="ChEBI" id="CHEBI:33019"/>
        <dbReference type="ChEBI" id="CHEBI:57623"/>
        <dbReference type="ChEBI" id="CHEBI:193004"/>
        <dbReference type="ChEBI" id="CHEBI:193009"/>
    </reaction>
    <physiologicalReaction direction="left-to-right" evidence="3 4">
        <dbReference type="Rhea" id="RHEA:73792"/>
    </physiologicalReaction>
</comment>
<comment type="catalytic activity">
    <reaction evidence="3 4">
        <text>neoechinulin A + dimethylallyl diphosphate = isoechinulin A + diphosphate</text>
        <dbReference type="Rhea" id="RHEA:73795"/>
        <dbReference type="ChEBI" id="CHEBI:33019"/>
        <dbReference type="ChEBI" id="CHEBI:57623"/>
        <dbReference type="ChEBI" id="CHEBI:193004"/>
        <dbReference type="ChEBI" id="CHEBI:193010"/>
    </reaction>
    <physiologicalReaction direction="left-to-right" evidence="3 4">
        <dbReference type="Rhea" id="RHEA:73796"/>
    </physiologicalReaction>
</comment>
<comment type="catalytic activity">
    <reaction evidence="3 4">
        <text>isoechinulin A + dimethylallyl diphosphate = dehydroechinulin + diphosphate</text>
        <dbReference type="Rhea" id="RHEA:73799"/>
        <dbReference type="ChEBI" id="CHEBI:33019"/>
        <dbReference type="ChEBI" id="CHEBI:57623"/>
        <dbReference type="ChEBI" id="CHEBI:193010"/>
        <dbReference type="ChEBI" id="CHEBI:193011"/>
    </reaction>
    <physiologicalReaction direction="left-to-right" evidence="3 4">
        <dbReference type="Rhea" id="RHEA:73800"/>
    </physiologicalReaction>
</comment>
<comment type="catalytic activity">
    <reaction evidence="3 4">
        <text>neoechinulin B + dimethylallyl diphosphate = isoechinulin B + diphosphate</text>
        <dbReference type="Rhea" id="RHEA:73803"/>
        <dbReference type="ChEBI" id="CHEBI:33019"/>
        <dbReference type="ChEBI" id="CHEBI:57623"/>
        <dbReference type="ChEBI" id="CHEBI:193005"/>
        <dbReference type="ChEBI" id="CHEBI:193026"/>
    </reaction>
    <physiologicalReaction direction="left-to-right" evidence="3 4">
        <dbReference type="Rhea" id="RHEA:73804"/>
    </physiologicalReaction>
</comment>
<comment type="biophysicochemical properties">
    <kinetics>
        <KM evidence="3">0.03 mM for preechinulin</KM>
        <KM evidence="3">0.1 mM for dimethylallyl diphosphate (DMAPP)</KM>
        <Vmax evidence="4">356.0 nmol/min/mg enzyme towards preechinulin</Vmax>
    </kinetics>
</comment>
<comment type="pathway">
    <text evidence="3 4">Secondary metabolite biosynthesis.</text>
</comment>
<comment type="pathway">
    <text evidence="3 4">Alkaloid biosynthesis.</text>
</comment>
<comment type="similarity">
    <text evidence="7">Belongs to the tryptophan dimethylallyltransferase family.</text>
</comment>
<feature type="chain" id="PRO_0000457017" description="Echinulin prenyltransferase 2">
    <location>
        <begin position="1"/>
        <end position="408"/>
    </location>
</feature>
<feature type="binding site" evidence="2">
    <location>
        <position position="94"/>
    </location>
    <ligand>
        <name>dimethylallyl diphosphate</name>
        <dbReference type="ChEBI" id="CHEBI:57623"/>
    </ligand>
</feature>
<feature type="binding site" evidence="2">
    <location>
        <position position="181"/>
    </location>
    <ligand>
        <name>dimethylallyl diphosphate</name>
        <dbReference type="ChEBI" id="CHEBI:57623"/>
    </ligand>
</feature>
<feature type="binding site" evidence="2">
    <location>
        <position position="183"/>
    </location>
    <ligand>
        <name>dimethylallyl diphosphate</name>
        <dbReference type="ChEBI" id="CHEBI:57623"/>
    </ligand>
</feature>
<feature type="binding site" evidence="2">
    <location>
        <position position="248"/>
    </location>
    <ligand>
        <name>dimethylallyl diphosphate</name>
        <dbReference type="ChEBI" id="CHEBI:57623"/>
    </ligand>
</feature>
<feature type="binding site" evidence="2">
    <location>
        <position position="250"/>
    </location>
    <ligand>
        <name>dimethylallyl diphosphate</name>
        <dbReference type="ChEBI" id="CHEBI:57623"/>
    </ligand>
</feature>
<feature type="binding site" evidence="2">
    <location>
        <position position="252"/>
    </location>
    <ligand>
        <name>dimethylallyl diphosphate</name>
        <dbReference type="ChEBI" id="CHEBI:57623"/>
    </ligand>
</feature>
<feature type="binding site" evidence="2">
    <location>
        <position position="334"/>
    </location>
    <ligand>
        <name>dimethylallyl diphosphate</name>
        <dbReference type="ChEBI" id="CHEBI:57623"/>
    </ligand>
</feature>
<feature type="binding site" evidence="2">
    <location>
        <position position="336"/>
    </location>
    <ligand>
        <name>dimethylallyl diphosphate</name>
        <dbReference type="ChEBI" id="CHEBI:57623"/>
    </ligand>
</feature>
<feature type="binding site" evidence="2">
    <location>
        <position position="400"/>
    </location>
    <ligand>
        <name>dimethylallyl diphosphate</name>
        <dbReference type="ChEBI" id="CHEBI:57623"/>
    </ligand>
</feature>
<feature type="binding site" evidence="2">
    <location>
        <position position="404"/>
    </location>
    <ligand>
        <name>dimethylallyl diphosphate</name>
        <dbReference type="ChEBI" id="CHEBI:57623"/>
    </ligand>
</feature>
<protein>
    <recommendedName>
        <fullName evidence="5">Echinulin prenyltransferase 2</fullName>
        <shortName evidence="5">EchPT2</shortName>
        <ecNumber evidence="3 4">2.5.1.-</ecNumber>
    </recommendedName>
    <alternativeName>
        <fullName evidence="5">Echinulin biosynthesis cluster protein echPT2</fullName>
    </alternativeName>
</protein>